<dbReference type="EC" id="2.1.1.-" evidence="1"/>
<dbReference type="EMBL" id="ACFL01000061">
    <property type="protein sequence ID" value="EEU07976.1"/>
    <property type="molecule type" value="Genomic_DNA"/>
</dbReference>
<dbReference type="Proteomes" id="UP000008073">
    <property type="component" value="Unassembled WGS sequence"/>
</dbReference>
<dbReference type="GO" id="GO:0005829">
    <property type="term" value="C:cytosol"/>
    <property type="evidence" value="ECO:0007669"/>
    <property type="project" value="TreeGrafter"/>
</dbReference>
<dbReference type="GO" id="GO:0032991">
    <property type="term" value="C:protein-containing complex"/>
    <property type="evidence" value="ECO:0007669"/>
    <property type="project" value="TreeGrafter"/>
</dbReference>
<dbReference type="GO" id="GO:0008757">
    <property type="term" value="F:S-adenosylmethionine-dependent methyltransferase activity"/>
    <property type="evidence" value="ECO:0007669"/>
    <property type="project" value="UniProtKB-ARBA"/>
</dbReference>
<dbReference type="GO" id="GO:0032259">
    <property type="term" value="P:methylation"/>
    <property type="evidence" value="ECO:0007669"/>
    <property type="project" value="UniProtKB-KW"/>
</dbReference>
<dbReference type="Gene3D" id="3.40.50.150">
    <property type="entry name" value="Vaccinia Virus protein VP39"/>
    <property type="match status" value="1"/>
</dbReference>
<dbReference type="InterPro" id="IPR019410">
    <property type="entry name" value="Methyltransf_16"/>
</dbReference>
<dbReference type="InterPro" id="IPR029063">
    <property type="entry name" value="SAM-dependent_MTases_sf"/>
</dbReference>
<dbReference type="PANTHER" id="PTHR14614">
    <property type="entry name" value="HEPATOCELLULAR CARCINOMA-ASSOCIATED ANTIGEN"/>
    <property type="match status" value="1"/>
</dbReference>
<dbReference type="PANTHER" id="PTHR14614:SF109">
    <property type="entry name" value="RIBOSOMAL LYSINE N-METHYLTRANSFERASE 5"/>
    <property type="match status" value="1"/>
</dbReference>
<protein>
    <recommendedName>
        <fullName evidence="1">Ribosomal lysine N-methyltransferase 5</fullName>
        <ecNumber evidence="1">2.1.1.-</ecNumber>
    </recommendedName>
</protein>
<keyword id="KW-0489">Methyltransferase</keyword>
<keyword id="KW-0949">S-adenosyl-L-methionine</keyword>
<keyword id="KW-0808">Transferase</keyword>
<sequence length="367" mass="41392">MAFKLWLLDEETIYEHVFERYTQLEGQSGKLAQDLGIQDRRGGVLEITFEPSGLEGGRKKKRVRRRNKASSVEEDQNVAVDSYHVSVGQSISSLRSSRDNGNSTTGYVLWSTTPFFINWLLYSTSAAPFRLGSQVEVTCGSSCEGHKLELPRLVDLTGADRGKRGILELGAGISGILPVILGNFVDTYVSTDQKGILNKLKDNIMENLSQLTRKRCISRSLRLELPTVEPVGDADITAASLPSKSTLHLEVAALDWEKINLQDKKTHSLHPELSLIGETCSSVYVIAMDVIYNEYLIDPFLKTLKQLKHWLQTTYNLQFHVLVGIHLRSQEVTTLFLEKAIIEYDFTVYDIVDQVIQESRFNFYLIT</sequence>
<evidence type="ECO:0000250" key="1">
    <source>
        <dbReference type="UniProtKB" id="Q12367"/>
    </source>
</evidence>
<evidence type="ECO:0000250" key="2">
    <source>
        <dbReference type="UniProtKB" id="Q9H867"/>
    </source>
</evidence>
<evidence type="ECO:0000305" key="3"/>
<name>RKM5_YEAS2</name>
<organism>
    <name type="scientific">Saccharomyces cerevisiae (strain JAY291)</name>
    <name type="common">Baker's yeast</name>
    <dbReference type="NCBI Taxonomy" id="574961"/>
    <lineage>
        <taxon>Eukaryota</taxon>
        <taxon>Fungi</taxon>
        <taxon>Dikarya</taxon>
        <taxon>Ascomycota</taxon>
        <taxon>Saccharomycotina</taxon>
        <taxon>Saccharomycetes</taxon>
        <taxon>Saccharomycetales</taxon>
        <taxon>Saccharomycetaceae</taxon>
        <taxon>Saccharomyces</taxon>
    </lineage>
</organism>
<accession>C7GMI9</accession>
<feature type="chain" id="PRO_0000411046" description="Ribosomal lysine N-methyltransferase 5">
    <location>
        <begin position="1"/>
        <end position="367"/>
    </location>
</feature>
<feature type="binding site" evidence="2">
    <location>
        <position position="110"/>
    </location>
    <ligand>
        <name>S-adenosyl-L-methionine</name>
        <dbReference type="ChEBI" id="CHEBI:59789"/>
    </ligand>
</feature>
<feature type="binding site" evidence="2">
    <location>
        <begin position="170"/>
        <end position="172"/>
    </location>
    <ligand>
        <name>S-adenosyl-L-methionine</name>
        <dbReference type="ChEBI" id="CHEBI:59789"/>
    </ligand>
</feature>
<feature type="binding site" evidence="2">
    <location>
        <position position="192"/>
    </location>
    <ligand>
        <name>S-adenosyl-L-methionine</name>
        <dbReference type="ChEBI" id="CHEBI:59789"/>
    </ligand>
</feature>
<feature type="binding site" evidence="2">
    <location>
        <position position="256"/>
    </location>
    <ligand>
        <name>S-adenosyl-L-methionine</name>
        <dbReference type="ChEBI" id="CHEBI:59789"/>
    </ligand>
</feature>
<feature type="binding site" evidence="2">
    <location>
        <position position="288"/>
    </location>
    <ligand>
        <name>S-adenosyl-L-methionine</name>
        <dbReference type="ChEBI" id="CHEBI:59789"/>
    </ligand>
</feature>
<gene>
    <name type="primary">RKM5</name>
    <name type="ORF">C1Q_01483</name>
</gene>
<reference key="1">
    <citation type="journal article" date="2009" name="Genome Res.">
        <title>Genome structure of a Saccharomyces cerevisiae strain widely used in bioethanol production.</title>
        <authorList>
            <person name="Argueso J.L."/>
            <person name="Carazzolle M.F."/>
            <person name="Mieczkowski P.A."/>
            <person name="Duarte F.M."/>
            <person name="Netto O.V.C."/>
            <person name="Missawa S.K."/>
            <person name="Galzerani F."/>
            <person name="Costa G.G.L."/>
            <person name="Vidal R.O."/>
            <person name="Noronha M.F."/>
            <person name="Dominska M."/>
            <person name="Andrietta M.G.S."/>
            <person name="Andrietta S.R."/>
            <person name="Cunha A.F."/>
            <person name="Gomes L.H."/>
            <person name="Tavares F.C.A."/>
            <person name="Alcarde A.R."/>
            <person name="Dietrich F.S."/>
            <person name="McCusker J.H."/>
            <person name="Petes T.D."/>
            <person name="Pereira G.A.G."/>
        </authorList>
    </citation>
    <scope>NUCLEOTIDE SEQUENCE [LARGE SCALE GENOMIC DNA]</scope>
    <source>
        <strain>JAY291</strain>
    </source>
</reference>
<proteinExistence type="inferred from homology"/>
<comment type="function">
    <text evidence="1">S-adenosyl-L-methionine-dependent protein-lysine N-methyltransferase that monomethylates 60S ribosomal protein L1 (RPL1A and RPL1B) at 'Lys-46'.</text>
</comment>
<comment type="similarity">
    <text evidence="3">Belongs to the class I-like SAM-binding methyltransferase superfamily. RKM5 family.</text>
</comment>